<name>NETO1_MOUSE</name>
<accession>Q8R4I7</accession>
<accession>Q80X39</accession>
<accession>Q8C4S3</accession>
<accession>Q8CCM2</accession>
<sequence>MIYGRSLFHIIASLIILHSSGATKKGTEKQITPETQKSVQCGTWTKHAEGGVFTSPNYPSKYPPDRECVYIIEAAPRQCIELYFDEKYSIEPSWECKFDHIEVRDGPFGFSPIIGRFCGQQNPPVIKSSGRFLWIKFFADGELESMGFSARYNFTPDPDFKDLGVLKPLPACEFEMGGPEGIVESIQILKEGKASASEAVDCKWYIRAPPRSKIYLRFLDYEMQNSNECKRNFVAVYDGSSSVEDLKAKFCSTVANDVMLRTGLGVIRMWADEGSRNSRFQMLFTSFQEPPCEGNTFFCHSNMCINNTLVCNGLQNCVYPWDENHCKEKRKTSLLDQLTNTSGTVIGVTSCIVIILIIVSVIVQIKQPRKKYVQRKSDFDQTVFQEVFEPPHYELCTLRGTGATADFADVAEDFENYHKLRRSSSKCIHDHHCGSQLSSAKGSRSNLSTRDASILAEIPTQPVKPLIPPVNRRNILVMKHNYSQDAADACDIDEIEEVPTTSHRLSRHEKSVQRFCLIGSLSKHESEYNTTRV</sequence>
<protein>
    <recommendedName>
        <fullName>Neuropilin and tolloid-like protein 1</fullName>
    </recommendedName>
    <alternativeName>
        <fullName>Brain-specific transmembrane protein containing 2 CUB and 1 LDL-receptor class A domains protein 1</fullName>
    </alternativeName>
</protein>
<comment type="function">
    <text evidence="5 7">Involved in the development and/or maintenance of neuronal circuitry. Accessory subunit of the neuronal N-methyl-D-aspartate receptor (NMDAR) critical for maintaining the abundance of GRIN2A-containing NMDARs in the postsynaptic density. Regulates long-term NMDA receptor-dependent synaptic plasticity and cognition, at least in the context of spatial learning and memory.</text>
</comment>
<comment type="subunit">
    <text evidence="7">Interacts with PLZ domains of DLG2, DLG3 and DLG4 via its C-terminal TRV domain. Interacts with GRIN2A and GRIN2B via its CUB domains.</text>
</comment>
<comment type="interaction">
    <interactant intactId="EBI-2314926">
        <id>Q8R4I7</id>
    </interactant>
    <interactant intactId="EBI-300895">
        <id>Q62108</id>
        <label>Dlg4</label>
    </interactant>
    <organismsDiffer>false</organismsDiffer>
    <experiments>7</experiments>
</comment>
<comment type="interaction">
    <interactant intactId="EBI-2314926">
        <id>Q8R4I7</id>
    </interactant>
    <interactant intactId="EBI-80389">
        <id>P78352</id>
        <label>DLG4</label>
    </interactant>
    <organismsDiffer>true</organismsDiffer>
    <experiments>2</experiments>
</comment>
<comment type="interaction">
    <interactant intactId="EBI-2314926">
        <id>Q8R4I7</id>
    </interactant>
    <interactant intactId="EBI-630970">
        <id>Q00959</id>
        <label>Grin2a</label>
    </interactant>
    <organismsDiffer>true</organismsDiffer>
    <experiments>4</experiments>
</comment>
<comment type="interaction">
    <interactant intactId="EBI-2314926">
        <id>Q8R4I7</id>
    </interactant>
    <interactant intactId="EBI-396905">
        <id>Q00960</id>
        <label>Grin2b</label>
    </interactant>
    <organismsDiffer>true</organismsDiffer>
    <experiments>2</experiments>
</comment>
<comment type="subcellular location">
    <subcellularLocation>
        <location evidence="8">Membrane</location>
        <topology evidence="8">Single-pass type I membrane protein</topology>
    </subcellularLocation>
    <subcellularLocation>
        <location evidence="7">Postsynaptic density membrane</location>
    </subcellularLocation>
    <text>Component of the postsynaptic density (PSD) of excitatory synapses.</text>
</comment>
<comment type="tissue specificity">
    <text evidence="5 6 7">Expressed only in brain. Present throughout the central nervous system. Highly expressed in the hippocampal CA3 region, olfactory bulb and tubercle, caudate putamen, and neocortex in the adult brain.</text>
</comment>
<comment type="developmental stage">
    <text evidence="5 6">Observed restrictively in brain throughout embryonic and postnatal stages. Expression pattern in brain slightly changes from 13 dpc to postnatal day 21 (P21). Expressed in both cerebrum and cerebellum throughout P0 to P35. In the cerebrum expression reached a plateau at P14 while expression in the cerebellum remains constant throughout all postnatal stages.</text>
</comment>
<comment type="disruption phenotype">
    <text evidence="7">Depressed long-term potentiation (LTP) at Schaffer collateral-CA1 synapses, NMDAR-dependent spatial learning and memory. Rescued by the ampakine CX546 at physiological doses.</text>
</comment>
<dbReference type="EMBL" id="AF448840">
    <property type="protein sequence ID" value="AAM18028.1"/>
    <property type="molecule type" value="mRNA"/>
</dbReference>
<dbReference type="EMBL" id="AY138990">
    <property type="protein sequence ID" value="AAN38318.1"/>
    <property type="molecule type" value="mRNA"/>
</dbReference>
<dbReference type="EMBL" id="AK032510">
    <property type="protein sequence ID" value="BAC27902.1"/>
    <property type="molecule type" value="mRNA"/>
</dbReference>
<dbReference type="EMBL" id="AK081325">
    <property type="protein sequence ID" value="BAC38196.1"/>
    <property type="molecule type" value="mRNA"/>
</dbReference>
<dbReference type="EMBL" id="BC051145">
    <property type="protein sequence ID" value="AAH51145.1"/>
    <property type="molecule type" value="mRNA"/>
</dbReference>
<dbReference type="CCDS" id="CCDS29387.1"/>
<dbReference type="RefSeq" id="NP_659195.3">
    <property type="nucleotide sequence ID" value="NM_144946.4"/>
</dbReference>
<dbReference type="RefSeq" id="XP_006526543.1">
    <property type="nucleotide sequence ID" value="XM_006526480.5"/>
</dbReference>
<dbReference type="RefSeq" id="XP_006526544.1">
    <property type="nucleotide sequence ID" value="XM_006526481.5"/>
</dbReference>
<dbReference type="RefSeq" id="XP_006526545.1">
    <property type="nucleotide sequence ID" value="XM_006526482.3"/>
</dbReference>
<dbReference type="RefSeq" id="XP_017173396.1">
    <property type="nucleotide sequence ID" value="XM_017317907.1"/>
</dbReference>
<dbReference type="RefSeq" id="XP_017173397.1">
    <property type="nucleotide sequence ID" value="XM_017317908.1"/>
</dbReference>
<dbReference type="RefSeq" id="XP_036017044.1">
    <property type="nucleotide sequence ID" value="XM_036161151.1"/>
</dbReference>
<dbReference type="RefSeq" id="XP_036017045.1">
    <property type="nucleotide sequence ID" value="XM_036161152.1"/>
</dbReference>
<dbReference type="SMR" id="Q8R4I7"/>
<dbReference type="BioGRID" id="232925">
    <property type="interactions" value="1"/>
</dbReference>
<dbReference type="CORUM" id="Q8R4I7"/>
<dbReference type="DIP" id="DIP-48395N"/>
<dbReference type="FunCoup" id="Q8R4I7">
    <property type="interactions" value="220"/>
</dbReference>
<dbReference type="IntAct" id="Q8R4I7">
    <property type="interactions" value="10"/>
</dbReference>
<dbReference type="STRING" id="10090.ENSMUSP00000057340"/>
<dbReference type="GlyCosmos" id="Q8R4I7">
    <property type="glycosylation" value="2 sites, No reported glycans"/>
</dbReference>
<dbReference type="GlyGen" id="Q8R4I7">
    <property type="glycosylation" value="3 sites, 1 N-linked glycan (1 site)"/>
</dbReference>
<dbReference type="iPTMnet" id="Q8R4I7"/>
<dbReference type="PhosphoSitePlus" id="Q8R4I7"/>
<dbReference type="PaxDb" id="10090-ENSMUSP00000057340"/>
<dbReference type="PeptideAtlas" id="Q8R4I7"/>
<dbReference type="ProteomicsDB" id="287381"/>
<dbReference type="Antibodypedia" id="23286">
    <property type="antibodies" value="110 antibodies from 29 providers"/>
</dbReference>
<dbReference type="DNASU" id="246317"/>
<dbReference type="Ensembl" id="ENSMUST00000058829.4">
    <property type="protein sequence ID" value="ENSMUSP00000057340.3"/>
    <property type="gene ID" value="ENSMUSG00000050321.4"/>
</dbReference>
<dbReference type="GeneID" id="246317"/>
<dbReference type="KEGG" id="mmu:246317"/>
<dbReference type="UCSC" id="uc008fuz.2">
    <property type="organism name" value="mouse"/>
</dbReference>
<dbReference type="AGR" id="MGI:2180216"/>
<dbReference type="CTD" id="81832"/>
<dbReference type="MGI" id="MGI:2180216">
    <property type="gene designation" value="Neto1"/>
</dbReference>
<dbReference type="VEuPathDB" id="HostDB:ENSMUSG00000050321"/>
<dbReference type="eggNOG" id="ENOG502QUD4">
    <property type="taxonomic scope" value="Eukaryota"/>
</dbReference>
<dbReference type="GeneTree" id="ENSGT00940000156700"/>
<dbReference type="HOGENOM" id="CLU_015228_0_0_1"/>
<dbReference type="InParanoid" id="Q8R4I7"/>
<dbReference type="OMA" id="KPLVQPM"/>
<dbReference type="OrthoDB" id="9971251at2759"/>
<dbReference type="PhylomeDB" id="Q8R4I7"/>
<dbReference type="BioGRID-ORCS" id="246317">
    <property type="hits" value="1 hit in 78 CRISPR screens"/>
</dbReference>
<dbReference type="ChiTaRS" id="Neto1">
    <property type="organism name" value="mouse"/>
</dbReference>
<dbReference type="PRO" id="PR:Q8R4I7"/>
<dbReference type="Proteomes" id="UP000000589">
    <property type="component" value="Chromosome 18"/>
</dbReference>
<dbReference type="RNAct" id="Q8R4I7">
    <property type="molecule type" value="protein"/>
</dbReference>
<dbReference type="Bgee" id="ENSMUSG00000050321">
    <property type="expression patterns" value="Expressed in dorsal striatum and 105 other cell types or tissues"/>
</dbReference>
<dbReference type="ExpressionAtlas" id="Q8R4I7">
    <property type="expression patterns" value="baseline and differential"/>
</dbReference>
<dbReference type="GO" id="GO:1904115">
    <property type="term" value="C:axon cytoplasm"/>
    <property type="evidence" value="ECO:0007669"/>
    <property type="project" value="GOC"/>
</dbReference>
<dbReference type="GO" id="GO:0060076">
    <property type="term" value="C:excitatory synapse"/>
    <property type="evidence" value="ECO:0000314"/>
    <property type="project" value="UniProtKB"/>
</dbReference>
<dbReference type="GO" id="GO:0098978">
    <property type="term" value="C:glutamatergic synapse"/>
    <property type="evidence" value="ECO:0000314"/>
    <property type="project" value="SynGO"/>
</dbReference>
<dbReference type="GO" id="GO:0014069">
    <property type="term" value="C:postsynaptic density"/>
    <property type="evidence" value="ECO:0000314"/>
    <property type="project" value="UniProtKB"/>
</dbReference>
<dbReference type="GO" id="GO:0098839">
    <property type="term" value="C:postsynaptic density membrane"/>
    <property type="evidence" value="ECO:0000314"/>
    <property type="project" value="SynGO"/>
</dbReference>
<dbReference type="GO" id="GO:0098685">
    <property type="term" value="C:Schaffer collateral - CA1 synapse"/>
    <property type="evidence" value="ECO:0000314"/>
    <property type="project" value="SynGO"/>
</dbReference>
<dbReference type="GO" id="GO:0045202">
    <property type="term" value="C:synapse"/>
    <property type="evidence" value="ECO:0000314"/>
    <property type="project" value="MGI"/>
</dbReference>
<dbReference type="GO" id="GO:0035255">
    <property type="term" value="F:ionotropic glutamate receptor binding"/>
    <property type="evidence" value="ECO:0000353"/>
    <property type="project" value="MGI"/>
</dbReference>
<dbReference type="GO" id="GO:0140231">
    <property type="term" value="P:anterograde axonal transport of neurotransmitter receptor complex"/>
    <property type="evidence" value="ECO:0000314"/>
    <property type="project" value="SynGO"/>
</dbReference>
<dbReference type="GO" id="GO:0007613">
    <property type="term" value="P:memory"/>
    <property type="evidence" value="ECO:0000315"/>
    <property type="project" value="UniProtKB"/>
</dbReference>
<dbReference type="GO" id="GO:0099645">
    <property type="term" value="P:neurotransmitter receptor localization to postsynaptic specialization membrane"/>
    <property type="evidence" value="ECO:0000314"/>
    <property type="project" value="SynGO"/>
</dbReference>
<dbReference type="GO" id="GO:2000463">
    <property type="term" value="P:positive regulation of excitatory postsynaptic potential"/>
    <property type="evidence" value="ECO:0000315"/>
    <property type="project" value="MGI"/>
</dbReference>
<dbReference type="GO" id="GO:0097120">
    <property type="term" value="P:receptor localization to synapse"/>
    <property type="evidence" value="ECO:0000315"/>
    <property type="project" value="MGI"/>
</dbReference>
<dbReference type="GO" id="GO:0048169">
    <property type="term" value="P:regulation of long-term neuronal synaptic plasticity"/>
    <property type="evidence" value="ECO:0000315"/>
    <property type="project" value="UniProtKB"/>
</dbReference>
<dbReference type="GO" id="GO:0008542">
    <property type="term" value="P:visual learning"/>
    <property type="evidence" value="ECO:0000315"/>
    <property type="project" value="UniProtKB"/>
</dbReference>
<dbReference type="CDD" id="cd00041">
    <property type="entry name" value="CUB"/>
    <property type="match status" value="2"/>
</dbReference>
<dbReference type="CDD" id="cd00112">
    <property type="entry name" value="LDLa"/>
    <property type="match status" value="1"/>
</dbReference>
<dbReference type="FunFam" id="2.40.128.620:FF:000001">
    <property type="entry name" value="neuropilin and tolloid-like protein 1"/>
    <property type="match status" value="1"/>
</dbReference>
<dbReference type="FunFam" id="2.60.120.290:FF:000016">
    <property type="entry name" value="neuropilin and tolloid-like protein 2"/>
    <property type="match status" value="1"/>
</dbReference>
<dbReference type="FunFam" id="2.60.120.290:FF:000020">
    <property type="entry name" value="Neuropilin and tolloid-like protein 2 isoform 1"/>
    <property type="match status" value="1"/>
</dbReference>
<dbReference type="Gene3D" id="2.40.128.620">
    <property type="match status" value="1"/>
</dbReference>
<dbReference type="Gene3D" id="2.60.120.290">
    <property type="entry name" value="Spermadhesin, CUB domain"/>
    <property type="match status" value="2"/>
</dbReference>
<dbReference type="InterPro" id="IPR000859">
    <property type="entry name" value="CUB_dom"/>
</dbReference>
<dbReference type="InterPro" id="IPR036055">
    <property type="entry name" value="LDL_receptor-like_sf"/>
</dbReference>
<dbReference type="InterPro" id="IPR023415">
    <property type="entry name" value="LDLR_class-A_CS"/>
</dbReference>
<dbReference type="InterPro" id="IPR002172">
    <property type="entry name" value="LDrepeatLR_classA_rpt"/>
</dbReference>
<dbReference type="InterPro" id="IPR035914">
    <property type="entry name" value="Sperma_CUB_dom_sf"/>
</dbReference>
<dbReference type="PANTHER" id="PTHR24251:SF27">
    <property type="entry name" value="NEUROPILIN AND TOLLOID-LIKE PROTEIN 1"/>
    <property type="match status" value="1"/>
</dbReference>
<dbReference type="PANTHER" id="PTHR24251">
    <property type="entry name" value="OVOCHYMASE-RELATED"/>
    <property type="match status" value="1"/>
</dbReference>
<dbReference type="Pfam" id="PF00431">
    <property type="entry name" value="CUB"/>
    <property type="match status" value="2"/>
</dbReference>
<dbReference type="Pfam" id="PF00057">
    <property type="entry name" value="Ldl_recept_a"/>
    <property type="match status" value="1"/>
</dbReference>
<dbReference type="SMART" id="SM00042">
    <property type="entry name" value="CUB"/>
    <property type="match status" value="2"/>
</dbReference>
<dbReference type="SMART" id="SM00192">
    <property type="entry name" value="LDLa"/>
    <property type="match status" value="1"/>
</dbReference>
<dbReference type="SUPFAM" id="SSF57424">
    <property type="entry name" value="LDL receptor-like module"/>
    <property type="match status" value="1"/>
</dbReference>
<dbReference type="SUPFAM" id="SSF49854">
    <property type="entry name" value="Spermadhesin, CUB domain"/>
    <property type="match status" value="2"/>
</dbReference>
<dbReference type="PROSITE" id="PS01180">
    <property type="entry name" value="CUB"/>
    <property type="match status" value="2"/>
</dbReference>
<dbReference type="PROSITE" id="PS01209">
    <property type="entry name" value="LDLRA_1"/>
    <property type="match status" value="1"/>
</dbReference>
<dbReference type="PROSITE" id="PS50068">
    <property type="entry name" value="LDLRA_2"/>
    <property type="match status" value="1"/>
</dbReference>
<evidence type="ECO:0000250" key="1"/>
<evidence type="ECO:0000255" key="2"/>
<evidence type="ECO:0000255" key="3">
    <source>
        <dbReference type="PROSITE-ProRule" id="PRU00059"/>
    </source>
</evidence>
<evidence type="ECO:0000255" key="4">
    <source>
        <dbReference type="PROSITE-ProRule" id="PRU00124"/>
    </source>
</evidence>
<evidence type="ECO:0000269" key="5">
    <source>
    </source>
</evidence>
<evidence type="ECO:0000269" key="6">
    <source>
    </source>
</evidence>
<evidence type="ECO:0000269" key="7">
    <source>
    </source>
</evidence>
<evidence type="ECO:0000305" key="8"/>
<evidence type="ECO:0007744" key="9">
    <source>
    </source>
</evidence>
<gene>
    <name type="primary">Neto1</name>
    <name type="synonym">Btcl1</name>
</gene>
<proteinExistence type="evidence at protein level"/>
<feature type="signal peptide" evidence="2">
    <location>
        <begin position="1"/>
        <end position="22"/>
    </location>
</feature>
<feature type="chain" id="PRO_0000021800" description="Neuropilin and tolloid-like protein 1">
    <location>
        <begin position="23"/>
        <end position="533"/>
    </location>
</feature>
<feature type="topological domain" description="Extracellular" evidence="2">
    <location>
        <begin position="23"/>
        <end position="344"/>
    </location>
</feature>
<feature type="transmembrane region" description="Helical" evidence="2">
    <location>
        <begin position="345"/>
        <end position="365"/>
    </location>
</feature>
<feature type="topological domain" description="Cytoplasmic" evidence="2">
    <location>
        <begin position="366"/>
        <end position="533"/>
    </location>
</feature>
<feature type="domain" description="CUB 1" evidence="3">
    <location>
        <begin position="41"/>
        <end position="155"/>
    </location>
</feature>
<feature type="domain" description="CUB 2" evidence="3">
    <location>
        <begin position="172"/>
        <end position="287"/>
    </location>
</feature>
<feature type="domain" description="LDL-receptor class A" evidence="4">
    <location>
        <begin position="291"/>
        <end position="327"/>
    </location>
</feature>
<feature type="short sequence motif" description="PDZ-binding">
    <location>
        <begin position="531"/>
        <end position="533"/>
    </location>
</feature>
<feature type="modified residue" description="Phosphotyrosine" evidence="9">
    <location>
        <position position="417"/>
    </location>
</feature>
<feature type="glycosylation site" description="N-linked (GlcNAc...) asparagine" evidence="2">
    <location>
        <position position="306"/>
    </location>
</feature>
<feature type="glycosylation site" description="N-linked (GlcNAc...) asparagine" evidence="2">
    <location>
        <position position="340"/>
    </location>
</feature>
<feature type="disulfide bond" evidence="1">
    <location>
        <begin position="41"/>
        <end position="68"/>
    </location>
</feature>
<feature type="disulfide bond" evidence="1">
    <location>
        <begin position="96"/>
        <end position="118"/>
    </location>
</feature>
<feature type="disulfide bond" evidence="1">
    <location>
        <begin position="172"/>
        <end position="202"/>
    </location>
</feature>
<feature type="disulfide bond" evidence="1">
    <location>
        <begin position="229"/>
        <end position="251"/>
    </location>
</feature>
<feature type="disulfide bond" evidence="1">
    <location>
        <begin position="292"/>
        <end position="304"/>
    </location>
</feature>
<feature type="disulfide bond" evidence="1">
    <location>
        <begin position="299"/>
        <end position="317"/>
    </location>
</feature>
<feature type="disulfide bond" evidence="1">
    <location>
        <begin position="311"/>
        <end position="326"/>
    </location>
</feature>
<feature type="sequence conflict" description="In Ref. 3; BAC38196." evidence="8" ref="3">
    <original>I</original>
    <variation>F</variation>
    <location>
        <position position="80"/>
    </location>
</feature>
<feature type="sequence conflict" description="In Ref. 1; AAM18028 and 3; BAC38196." evidence="8" ref="1 3">
    <original>R</original>
    <variation>Q</variation>
    <location>
        <position position="514"/>
    </location>
</feature>
<keyword id="KW-1003">Cell membrane</keyword>
<keyword id="KW-1015">Disulfide bond</keyword>
<keyword id="KW-0325">Glycoprotein</keyword>
<keyword id="KW-0472">Membrane</keyword>
<keyword id="KW-0597">Phosphoprotein</keyword>
<keyword id="KW-0628">Postsynaptic cell membrane</keyword>
<keyword id="KW-0675">Receptor</keyword>
<keyword id="KW-1185">Reference proteome</keyword>
<keyword id="KW-0677">Repeat</keyword>
<keyword id="KW-0732">Signal</keyword>
<keyword id="KW-0770">Synapse</keyword>
<keyword id="KW-0812">Transmembrane</keyword>
<keyword id="KW-1133">Transmembrane helix</keyword>
<reference key="1">
    <citation type="journal article" date="2002" name="Gene">
        <title>A novel gene encoding a putative transmembrane protein with two extracellular CUB domains and a low-density lipoprotein class A module: isolation of alternatively spliced isoforms in retina and brain.</title>
        <authorList>
            <person name="Stoehr H."/>
            <person name="Berger C."/>
            <person name="Froehlich S."/>
            <person name="Weber B.H.F."/>
        </authorList>
    </citation>
    <scope>NUCLEOTIDE SEQUENCE [MRNA]</scope>
    <source>
        <tissue>Retina</tissue>
    </source>
</reference>
<reference key="2">
    <citation type="journal article" date="2003" name="Biochem. Biophys. Res. Commun.">
        <title>A novel gene, Btcl1, encoding CUB and LDLa domains is expressed in restricted areas of mouse brain.</title>
        <authorList>
            <person name="Michishita M."/>
            <person name="Ikeda T."/>
            <person name="Nakashiba T."/>
            <person name="Ogawa M."/>
            <person name="Tashiro K."/>
            <person name="Honjo T."/>
            <person name="Doi K."/>
            <person name="Itohara S."/>
            <person name="Endo S."/>
        </authorList>
    </citation>
    <scope>NUCLEOTIDE SEQUENCE [MRNA]</scope>
    <scope>FUNCTION</scope>
    <scope>TISSUE SPECIFICITY</scope>
    <scope>DEVELOPMENTAL STAGE</scope>
    <source>
        <strain>C57BL/6J</strain>
        <tissue>Brain</tissue>
    </source>
</reference>
<reference key="3">
    <citation type="journal article" date="2005" name="Science">
        <title>The transcriptional landscape of the mammalian genome.</title>
        <authorList>
            <person name="Carninci P."/>
            <person name="Kasukawa T."/>
            <person name="Katayama S."/>
            <person name="Gough J."/>
            <person name="Frith M.C."/>
            <person name="Maeda N."/>
            <person name="Oyama R."/>
            <person name="Ravasi T."/>
            <person name="Lenhard B."/>
            <person name="Wells C."/>
            <person name="Kodzius R."/>
            <person name="Shimokawa K."/>
            <person name="Bajic V.B."/>
            <person name="Brenner S.E."/>
            <person name="Batalov S."/>
            <person name="Forrest A.R."/>
            <person name="Zavolan M."/>
            <person name="Davis M.J."/>
            <person name="Wilming L.G."/>
            <person name="Aidinis V."/>
            <person name="Allen J.E."/>
            <person name="Ambesi-Impiombato A."/>
            <person name="Apweiler R."/>
            <person name="Aturaliya R.N."/>
            <person name="Bailey T.L."/>
            <person name="Bansal M."/>
            <person name="Baxter L."/>
            <person name="Beisel K.W."/>
            <person name="Bersano T."/>
            <person name="Bono H."/>
            <person name="Chalk A.M."/>
            <person name="Chiu K.P."/>
            <person name="Choudhary V."/>
            <person name="Christoffels A."/>
            <person name="Clutterbuck D.R."/>
            <person name="Crowe M.L."/>
            <person name="Dalla E."/>
            <person name="Dalrymple B.P."/>
            <person name="de Bono B."/>
            <person name="Della Gatta G."/>
            <person name="di Bernardo D."/>
            <person name="Down T."/>
            <person name="Engstrom P."/>
            <person name="Fagiolini M."/>
            <person name="Faulkner G."/>
            <person name="Fletcher C.F."/>
            <person name="Fukushima T."/>
            <person name="Furuno M."/>
            <person name="Futaki S."/>
            <person name="Gariboldi M."/>
            <person name="Georgii-Hemming P."/>
            <person name="Gingeras T.R."/>
            <person name="Gojobori T."/>
            <person name="Green R.E."/>
            <person name="Gustincich S."/>
            <person name="Harbers M."/>
            <person name="Hayashi Y."/>
            <person name="Hensch T.K."/>
            <person name="Hirokawa N."/>
            <person name="Hill D."/>
            <person name="Huminiecki L."/>
            <person name="Iacono M."/>
            <person name="Ikeo K."/>
            <person name="Iwama A."/>
            <person name="Ishikawa T."/>
            <person name="Jakt M."/>
            <person name="Kanapin A."/>
            <person name="Katoh M."/>
            <person name="Kawasawa Y."/>
            <person name="Kelso J."/>
            <person name="Kitamura H."/>
            <person name="Kitano H."/>
            <person name="Kollias G."/>
            <person name="Krishnan S.P."/>
            <person name="Kruger A."/>
            <person name="Kummerfeld S.K."/>
            <person name="Kurochkin I.V."/>
            <person name="Lareau L.F."/>
            <person name="Lazarevic D."/>
            <person name="Lipovich L."/>
            <person name="Liu J."/>
            <person name="Liuni S."/>
            <person name="McWilliam S."/>
            <person name="Madan Babu M."/>
            <person name="Madera M."/>
            <person name="Marchionni L."/>
            <person name="Matsuda H."/>
            <person name="Matsuzawa S."/>
            <person name="Miki H."/>
            <person name="Mignone F."/>
            <person name="Miyake S."/>
            <person name="Morris K."/>
            <person name="Mottagui-Tabar S."/>
            <person name="Mulder N."/>
            <person name="Nakano N."/>
            <person name="Nakauchi H."/>
            <person name="Ng P."/>
            <person name="Nilsson R."/>
            <person name="Nishiguchi S."/>
            <person name="Nishikawa S."/>
            <person name="Nori F."/>
            <person name="Ohara O."/>
            <person name="Okazaki Y."/>
            <person name="Orlando V."/>
            <person name="Pang K.C."/>
            <person name="Pavan W.J."/>
            <person name="Pavesi G."/>
            <person name="Pesole G."/>
            <person name="Petrovsky N."/>
            <person name="Piazza S."/>
            <person name="Reed J."/>
            <person name="Reid J.F."/>
            <person name="Ring B.Z."/>
            <person name="Ringwald M."/>
            <person name="Rost B."/>
            <person name="Ruan Y."/>
            <person name="Salzberg S.L."/>
            <person name="Sandelin A."/>
            <person name="Schneider C."/>
            <person name="Schoenbach C."/>
            <person name="Sekiguchi K."/>
            <person name="Semple C.A."/>
            <person name="Seno S."/>
            <person name="Sessa L."/>
            <person name="Sheng Y."/>
            <person name="Shibata Y."/>
            <person name="Shimada H."/>
            <person name="Shimada K."/>
            <person name="Silva D."/>
            <person name="Sinclair B."/>
            <person name="Sperling S."/>
            <person name="Stupka E."/>
            <person name="Sugiura K."/>
            <person name="Sultana R."/>
            <person name="Takenaka Y."/>
            <person name="Taki K."/>
            <person name="Tammoja K."/>
            <person name="Tan S.L."/>
            <person name="Tang S."/>
            <person name="Taylor M.S."/>
            <person name="Tegner J."/>
            <person name="Teichmann S.A."/>
            <person name="Ueda H.R."/>
            <person name="van Nimwegen E."/>
            <person name="Verardo R."/>
            <person name="Wei C.L."/>
            <person name="Yagi K."/>
            <person name="Yamanishi H."/>
            <person name="Zabarovsky E."/>
            <person name="Zhu S."/>
            <person name="Zimmer A."/>
            <person name="Hide W."/>
            <person name="Bult C."/>
            <person name="Grimmond S.M."/>
            <person name="Teasdale R.D."/>
            <person name="Liu E.T."/>
            <person name="Brusic V."/>
            <person name="Quackenbush J."/>
            <person name="Wahlestedt C."/>
            <person name="Mattick J.S."/>
            <person name="Hume D.A."/>
            <person name="Kai C."/>
            <person name="Sasaki D."/>
            <person name="Tomaru Y."/>
            <person name="Fukuda S."/>
            <person name="Kanamori-Katayama M."/>
            <person name="Suzuki M."/>
            <person name="Aoki J."/>
            <person name="Arakawa T."/>
            <person name="Iida J."/>
            <person name="Imamura K."/>
            <person name="Itoh M."/>
            <person name="Kato T."/>
            <person name="Kawaji H."/>
            <person name="Kawagashira N."/>
            <person name="Kawashima T."/>
            <person name="Kojima M."/>
            <person name="Kondo S."/>
            <person name="Konno H."/>
            <person name="Nakano K."/>
            <person name="Ninomiya N."/>
            <person name="Nishio T."/>
            <person name="Okada M."/>
            <person name="Plessy C."/>
            <person name="Shibata K."/>
            <person name="Shiraki T."/>
            <person name="Suzuki S."/>
            <person name="Tagami M."/>
            <person name="Waki K."/>
            <person name="Watahiki A."/>
            <person name="Okamura-Oho Y."/>
            <person name="Suzuki H."/>
            <person name="Kawai J."/>
            <person name="Hayashizaki Y."/>
        </authorList>
    </citation>
    <scope>NUCLEOTIDE SEQUENCE [LARGE SCALE MRNA]</scope>
    <source>
        <strain>C57BL/6J</strain>
        <tissue>Head</tissue>
        <tissue>Olfactory bulb</tissue>
    </source>
</reference>
<reference key="4">
    <citation type="journal article" date="2004" name="Genome Res.">
        <title>The status, quality, and expansion of the NIH full-length cDNA project: the Mammalian Gene Collection (MGC).</title>
        <authorList>
            <consortium name="The MGC Project Team"/>
        </authorList>
    </citation>
    <scope>NUCLEOTIDE SEQUENCE [LARGE SCALE MRNA]</scope>
    <source>
        <tissue>Brain</tissue>
    </source>
</reference>
<reference key="5">
    <citation type="journal article" date="2004" name="Brain Res. Dev. Brain Res.">
        <title>Expression of Btcl2, a novel member of Btcl gene family, during development of the central nervous system.</title>
        <authorList>
            <person name="Michishita M."/>
            <person name="Ikeda T."/>
            <person name="Nakashiba T."/>
            <person name="Ogawa M."/>
            <person name="Tashiro K."/>
            <person name="Honjo T."/>
            <person name="Doi K."/>
            <person name="Itohara S."/>
            <person name="Endo S."/>
        </authorList>
    </citation>
    <scope>DEVELOPMENTAL STAGE</scope>
    <scope>TISSUE SPECIFICITY</scope>
    <source>
        <strain>C57BL/6J</strain>
        <tissue>Brain</tissue>
    </source>
</reference>
<reference key="6">
    <citation type="journal article" date="2006" name="Mol. Cell. Proteomics">
        <title>Comprehensive identification of phosphorylation sites in postsynaptic density preparations.</title>
        <authorList>
            <person name="Trinidad J.C."/>
            <person name="Specht C.G."/>
            <person name="Thalhammer A."/>
            <person name="Schoepfer R."/>
            <person name="Burlingame A.L."/>
        </authorList>
    </citation>
    <scope>IDENTIFICATION BY MASS SPECTROMETRY [LARGE SCALE ANALYSIS]</scope>
    <source>
        <tissue>Brain</tissue>
    </source>
</reference>
<reference key="7">
    <citation type="journal article" date="2008" name="J. Proteome Res.">
        <title>Large-scale identification and evolution indexing of tyrosine phosphorylation sites from murine brain.</title>
        <authorList>
            <person name="Ballif B.A."/>
            <person name="Carey G.R."/>
            <person name="Sunyaev S.R."/>
            <person name="Gygi S.P."/>
        </authorList>
    </citation>
    <scope>PHOSPHORYLATION [LARGE SCALE ANALYSIS] AT TYR-417</scope>
    <scope>IDENTIFICATION BY MASS SPECTROMETRY [LARGE SCALE ANALYSIS]</scope>
    <source>
        <tissue>Brain</tissue>
    </source>
</reference>
<reference key="8">
    <citation type="journal article" date="2009" name="PLoS Biol.">
        <title>Neto1 is a novel CUB-domain NMDA receptor-interacting protein required for synaptic plasticity and learning.</title>
        <authorList>
            <person name="Ng D."/>
            <person name="Pitcher G.M."/>
            <person name="Szilard R.K."/>
            <person name="Sertie A."/>
            <person name="Kanisek M."/>
            <person name="Clapcote S.J."/>
            <person name="Lipina T."/>
            <person name="Kalia L.V."/>
            <person name="Joo D."/>
            <person name="McKerlie C."/>
            <person name="Cortez M."/>
            <person name="Roder J.C."/>
            <person name="Salter M.W."/>
            <person name="McInnes R.R."/>
        </authorList>
    </citation>
    <scope>FUNCTION</scope>
    <scope>DISRUPTION PHENOTYPE</scope>
    <scope>TISSUE SPECIFICITY</scope>
    <scope>SUBCELLULAR LOCATION</scope>
    <scope>INTERACTION WITH GRIN2A; GRIN2B; DLG2; DLG3 AND DLG4</scope>
</reference>
<organism>
    <name type="scientific">Mus musculus</name>
    <name type="common">Mouse</name>
    <dbReference type="NCBI Taxonomy" id="10090"/>
    <lineage>
        <taxon>Eukaryota</taxon>
        <taxon>Metazoa</taxon>
        <taxon>Chordata</taxon>
        <taxon>Craniata</taxon>
        <taxon>Vertebrata</taxon>
        <taxon>Euteleostomi</taxon>
        <taxon>Mammalia</taxon>
        <taxon>Eutheria</taxon>
        <taxon>Euarchontoglires</taxon>
        <taxon>Glires</taxon>
        <taxon>Rodentia</taxon>
        <taxon>Myomorpha</taxon>
        <taxon>Muroidea</taxon>
        <taxon>Muridae</taxon>
        <taxon>Murinae</taxon>
        <taxon>Mus</taxon>
        <taxon>Mus</taxon>
    </lineage>
</organism>